<keyword id="KW-0963">Cytoplasm</keyword>
<keyword id="KW-0227">DNA damage</keyword>
<keyword id="KW-0234">DNA repair</keyword>
<keyword id="KW-0378">Hydrolase</keyword>
<feature type="chain" id="PRO_1000009905" description="Uracil-DNA glycosylase">
    <location>
        <begin position="1"/>
        <end position="227"/>
    </location>
</feature>
<feature type="active site" description="Proton acceptor" evidence="1">
    <location>
        <position position="65"/>
    </location>
</feature>
<evidence type="ECO:0000255" key="1">
    <source>
        <dbReference type="HAMAP-Rule" id="MF_00148"/>
    </source>
</evidence>
<name>UNG_LACDB</name>
<proteinExistence type="inferred from homology"/>
<protein>
    <recommendedName>
        <fullName evidence="1">Uracil-DNA glycosylase</fullName>
        <shortName evidence="1">UDG</shortName>
        <ecNumber evidence="1">3.2.2.27</ecNumber>
    </recommendedName>
</protein>
<dbReference type="EC" id="3.2.2.27" evidence="1"/>
<dbReference type="EMBL" id="CP000412">
    <property type="protein sequence ID" value="ABJ58205.1"/>
    <property type="molecule type" value="Genomic_DNA"/>
</dbReference>
<dbReference type="RefSeq" id="WP_011678089.1">
    <property type="nucleotide sequence ID" value="NC_008529.1"/>
</dbReference>
<dbReference type="SMR" id="Q04BG7"/>
<dbReference type="KEGG" id="lbu:LBUL_0573"/>
<dbReference type="HOGENOM" id="CLU_032162_3_0_9"/>
<dbReference type="BioCyc" id="LDEL321956:LBUL_RS02725-MONOMER"/>
<dbReference type="GO" id="GO:0005737">
    <property type="term" value="C:cytoplasm"/>
    <property type="evidence" value="ECO:0007669"/>
    <property type="project" value="UniProtKB-SubCell"/>
</dbReference>
<dbReference type="GO" id="GO:0004844">
    <property type="term" value="F:uracil DNA N-glycosylase activity"/>
    <property type="evidence" value="ECO:0007669"/>
    <property type="project" value="UniProtKB-UniRule"/>
</dbReference>
<dbReference type="GO" id="GO:0097510">
    <property type="term" value="P:base-excision repair, AP site formation via deaminated base removal"/>
    <property type="evidence" value="ECO:0007669"/>
    <property type="project" value="TreeGrafter"/>
</dbReference>
<dbReference type="CDD" id="cd10027">
    <property type="entry name" value="UDG-F1-like"/>
    <property type="match status" value="1"/>
</dbReference>
<dbReference type="FunFam" id="3.40.470.10:FF:000001">
    <property type="entry name" value="Uracil-DNA glycosylase"/>
    <property type="match status" value="1"/>
</dbReference>
<dbReference type="Gene3D" id="3.40.470.10">
    <property type="entry name" value="Uracil-DNA glycosylase-like domain"/>
    <property type="match status" value="1"/>
</dbReference>
<dbReference type="HAMAP" id="MF_00148">
    <property type="entry name" value="UDG"/>
    <property type="match status" value="1"/>
</dbReference>
<dbReference type="InterPro" id="IPR002043">
    <property type="entry name" value="UDG_fam1"/>
</dbReference>
<dbReference type="InterPro" id="IPR018085">
    <property type="entry name" value="Ura-DNA_Glyclase_AS"/>
</dbReference>
<dbReference type="InterPro" id="IPR005122">
    <property type="entry name" value="Uracil-DNA_glycosylase-like"/>
</dbReference>
<dbReference type="InterPro" id="IPR036895">
    <property type="entry name" value="Uracil-DNA_glycosylase-like_sf"/>
</dbReference>
<dbReference type="NCBIfam" id="NF003588">
    <property type="entry name" value="PRK05254.1-1"/>
    <property type="match status" value="1"/>
</dbReference>
<dbReference type="NCBIfam" id="NF003589">
    <property type="entry name" value="PRK05254.1-2"/>
    <property type="match status" value="1"/>
</dbReference>
<dbReference type="NCBIfam" id="NF003592">
    <property type="entry name" value="PRK05254.1-5"/>
    <property type="match status" value="1"/>
</dbReference>
<dbReference type="NCBIfam" id="TIGR00628">
    <property type="entry name" value="ung"/>
    <property type="match status" value="1"/>
</dbReference>
<dbReference type="PANTHER" id="PTHR11264">
    <property type="entry name" value="URACIL-DNA GLYCOSYLASE"/>
    <property type="match status" value="1"/>
</dbReference>
<dbReference type="PANTHER" id="PTHR11264:SF0">
    <property type="entry name" value="URACIL-DNA GLYCOSYLASE"/>
    <property type="match status" value="1"/>
</dbReference>
<dbReference type="Pfam" id="PF03167">
    <property type="entry name" value="UDG"/>
    <property type="match status" value="1"/>
</dbReference>
<dbReference type="SMART" id="SM00986">
    <property type="entry name" value="UDG"/>
    <property type="match status" value="1"/>
</dbReference>
<dbReference type="SMART" id="SM00987">
    <property type="entry name" value="UreE_C"/>
    <property type="match status" value="1"/>
</dbReference>
<dbReference type="SUPFAM" id="SSF52141">
    <property type="entry name" value="Uracil-DNA glycosylase-like"/>
    <property type="match status" value="1"/>
</dbReference>
<dbReference type="PROSITE" id="PS00130">
    <property type="entry name" value="U_DNA_GLYCOSYLASE"/>
    <property type="match status" value="1"/>
</dbReference>
<organism>
    <name type="scientific">Lactobacillus delbrueckii subsp. bulgaricus (strain ATCC BAA-365 / Lb-18)</name>
    <dbReference type="NCBI Taxonomy" id="321956"/>
    <lineage>
        <taxon>Bacteria</taxon>
        <taxon>Bacillati</taxon>
        <taxon>Bacillota</taxon>
        <taxon>Bacilli</taxon>
        <taxon>Lactobacillales</taxon>
        <taxon>Lactobacillaceae</taxon>
        <taxon>Lactobacillus</taxon>
    </lineage>
</organism>
<gene>
    <name evidence="1" type="primary">ung</name>
    <name type="ordered locus">LBUL_0573</name>
</gene>
<reference key="1">
    <citation type="journal article" date="2006" name="Proc. Natl. Acad. Sci. U.S.A.">
        <title>Comparative genomics of the lactic acid bacteria.</title>
        <authorList>
            <person name="Makarova K.S."/>
            <person name="Slesarev A."/>
            <person name="Wolf Y.I."/>
            <person name="Sorokin A."/>
            <person name="Mirkin B."/>
            <person name="Koonin E.V."/>
            <person name="Pavlov A."/>
            <person name="Pavlova N."/>
            <person name="Karamychev V."/>
            <person name="Polouchine N."/>
            <person name="Shakhova V."/>
            <person name="Grigoriev I."/>
            <person name="Lou Y."/>
            <person name="Rohksar D."/>
            <person name="Lucas S."/>
            <person name="Huang K."/>
            <person name="Goodstein D.M."/>
            <person name="Hawkins T."/>
            <person name="Plengvidhya V."/>
            <person name="Welker D."/>
            <person name="Hughes J."/>
            <person name="Goh Y."/>
            <person name="Benson A."/>
            <person name="Baldwin K."/>
            <person name="Lee J.-H."/>
            <person name="Diaz-Muniz I."/>
            <person name="Dosti B."/>
            <person name="Smeianov V."/>
            <person name="Wechter W."/>
            <person name="Barabote R."/>
            <person name="Lorca G."/>
            <person name="Altermann E."/>
            <person name="Barrangou R."/>
            <person name="Ganesan B."/>
            <person name="Xie Y."/>
            <person name="Rawsthorne H."/>
            <person name="Tamir D."/>
            <person name="Parker C."/>
            <person name="Breidt F."/>
            <person name="Broadbent J.R."/>
            <person name="Hutkins R."/>
            <person name="O'Sullivan D."/>
            <person name="Steele J."/>
            <person name="Unlu G."/>
            <person name="Saier M.H. Jr."/>
            <person name="Klaenhammer T."/>
            <person name="Richardson P."/>
            <person name="Kozyavkin S."/>
            <person name="Weimer B.C."/>
            <person name="Mills D.A."/>
        </authorList>
    </citation>
    <scope>NUCLEOTIDE SEQUENCE [LARGE SCALE GENOMIC DNA]</scope>
    <source>
        <strain>ATCC BAA-365 / Lb-18</strain>
    </source>
</reference>
<accession>Q04BG7</accession>
<comment type="function">
    <text evidence="1">Excises uracil residues from the DNA which can arise as a result of misincorporation of dUMP residues by DNA polymerase or due to deamination of cytosine.</text>
</comment>
<comment type="catalytic activity">
    <reaction evidence="1">
        <text>Hydrolyzes single-stranded DNA or mismatched double-stranded DNA and polynucleotides, releasing free uracil.</text>
        <dbReference type="EC" id="3.2.2.27"/>
    </reaction>
</comment>
<comment type="subcellular location">
    <subcellularLocation>
        <location evidence="1">Cytoplasm</location>
    </subcellularLocation>
</comment>
<comment type="similarity">
    <text evidence="1">Belongs to the uracil-DNA glycosylase (UDG) superfamily. UNG family.</text>
</comment>
<sequence length="227" mass="25653">MKHFIGNDWDHVLAPVFESGEYHKLHVFLKKEYQTKQIYPDMYHIFTAFKLTPFKDTKVVILGQDPYHNPSQANGMSFSVMPGTPLPPSLRNIYKELYDDVGAQPVNHGYLKRWADQGVLLLNAVLTVPYGQANGHQGKGWEMVTDAAIKALSERGQVVFILWGRFAQNKIPLIDQDKNVIIKSAHPSPFSANRGFFGSRPFSRCNAALKEFGRAPVDWQLPPNTEA</sequence>